<reference key="1">
    <citation type="submission" date="2005-03" db="EMBL/GenBank/DDBJ databases">
        <title>Brevibacillus brevis strain 47, complete genome.</title>
        <authorList>
            <person name="Hosoyama A."/>
            <person name="Yamada R."/>
            <person name="Hongo Y."/>
            <person name="Terui Y."/>
            <person name="Ankai A."/>
            <person name="Masuyama W."/>
            <person name="Sekiguchi M."/>
            <person name="Takeda T."/>
            <person name="Asano K."/>
            <person name="Ohji S."/>
            <person name="Ichikawa N."/>
            <person name="Narita S."/>
            <person name="Aoki N."/>
            <person name="Miura H."/>
            <person name="Matsushita S."/>
            <person name="Sekigawa T."/>
            <person name="Yamagata H."/>
            <person name="Yoshikawa H."/>
            <person name="Udaka S."/>
            <person name="Tanikawa S."/>
            <person name="Fujita N."/>
        </authorList>
    </citation>
    <scope>NUCLEOTIDE SEQUENCE [LARGE SCALE GENOMIC DNA]</scope>
    <source>
        <strain>47 / JCM 6285 / NBRC 100599</strain>
    </source>
</reference>
<keyword id="KW-0028">Amino-acid biosynthesis</keyword>
<keyword id="KW-0100">Branched-chain amino acid biosynthesis</keyword>
<keyword id="KW-0432">Leucine biosynthesis</keyword>
<keyword id="KW-0456">Lyase</keyword>
<keyword id="KW-1185">Reference proteome</keyword>
<protein>
    <recommendedName>
        <fullName evidence="1">3-isopropylmalate dehydratase small subunit</fullName>
        <ecNumber evidence="1">4.2.1.33</ecNumber>
    </recommendedName>
    <alternativeName>
        <fullName evidence="1">Alpha-IPM isomerase</fullName>
        <shortName evidence="1">IPMI</shortName>
    </alternativeName>
    <alternativeName>
        <fullName evidence="1">Isopropylmalate isomerase</fullName>
    </alternativeName>
</protein>
<evidence type="ECO:0000255" key="1">
    <source>
        <dbReference type="HAMAP-Rule" id="MF_01031"/>
    </source>
</evidence>
<dbReference type="EC" id="4.2.1.33" evidence="1"/>
<dbReference type="EMBL" id="AP008955">
    <property type="protein sequence ID" value="BAH43509.1"/>
    <property type="molecule type" value="Genomic_DNA"/>
</dbReference>
<dbReference type="RefSeq" id="WP_012686214.1">
    <property type="nucleotide sequence ID" value="NC_012491.1"/>
</dbReference>
<dbReference type="SMR" id="C0ZCK0"/>
<dbReference type="STRING" id="358681.BBR47_25320"/>
<dbReference type="KEGG" id="bbe:BBR47_25320"/>
<dbReference type="eggNOG" id="COG0066">
    <property type="taxonomic scope" value="Bacteria"/>
</dbReference>
<dbReference type="HOGENOM" id="CLU_081378_0_3_9"/>
<dbReference type="UniPathway" id="UPA00048">
    <property type="reaction ID" value="UER00071"/>
</dbReference>
<dbReference type="Proteomes" id="UP000001877">
    <property type="component" value="Chromosome"/>
</dbReference>
<dbReference type="GO" id="GO:0009316">
    <property type="term" value="C:3-isopropylmalate dehydratase complex"/>
    <property type="evidence" value="ECO:0007669"/>
    <property type="project" value="InterPro"/>
</dbReference>
<dbReference type="GO" id="GO:0003861">
    <property type="term" value="F:3-isopropylmalate dehydratase activity"/>
    <property type="evidence" value="ECO:0007669"/>
    <property type="project" value="UniProtKB-UniRule"/>
</dbReference>
<dbReference type="GO" id="GO:0009098">
    <property type="term" value="P:L-leucine biosynthetic process"/>
    <property type="evidence" value="ECO:0007669"/>
    <property type="project" value="UniProtKB-UniRule"/>
</dbReference>
<dbReference type="CDD" id="cd01577">
    <property type="entry name" value="IPMI_Swivel"/>
    <property type="match status" value="1"/>
</dbReference>
<dbReference type="FunFam" id="3.20.19.10:FF:000003">
    <property type="entry name" value="3-isopropylmalate dehydratase small subunit"/>
    <property type="match status" value="1"/>
</dbReference>
<dbReference type="Gene3D" id="3.20.19.10">
    <property type="entry name" value="Aconitase, domain 4"/>
    <property type="match status" value="1"/>
</dbReference>
<dbReference type="HAMAP" id="MF_01031">
    <property type="entry name" value="LeuD_type1"/>
    <property type="match status" value="1"/>
</dbReference>
<dbReference type="InterPro" id="IPR004431">
    <property type="entry name" value="3-IsopropMal_deHydase_ssu"/>
</dbReference>
<dbReference type="InterPro" id="IPR015928">
    <property type="entry name" value="Aconitase/3IPM_dehydase_swvl"/>
</dbReference>
<dbReference type="InterPro" id="IPR000573">
    <property type="entry name" value="AconitaseA/IPMdHydase_ssu_swvl"/>
</dbReference>
<dbReference type="InterPro" id="IPR033940">
    <property type="entry name" value="IPMI_Swivel"/>
</dbReference>
<dbReference type="InterPro" id="IPR050075">
    <property type="entry name" value="LeuD"/>
</dbReference>
<dbReference type="NCBIfam" id="TIGR00171">
    <property type="entry name" value="leuD"/>
    <property type="match status" value="1"/>
</dbReference>
<dbReference type="NCBIfam" id="NF002458">
    <property type="entry name" value="PRK01641.1"/>
    <property type="match status" value="1"/>
</dbReference>
<dbReference type="PANTHER" id="PTHR43345:SF5">
    <property type="entry name" value="3-ISOPROPYLMALATE DEHYDRATASE SMALL SUBUNIT"/>
    <property type="match status" value="1"/>
</dbReference>
<dbReference type="PANTHER" id="PTHR43345">
    <property type="entry name" value="3-ISOPROPYLMALATE DEHYDRATASE SMALL SUBUNIT 2-RELATED-RELATED"/>
    <property type="match status" value="1"/>
</dbReference>
<dbReference type="Pfam" id="PF00694">
    <property type="entry name" value="Aconitase_C"/>
    <property type="match status" value="1"/>
</dbReference>
<dbReference type="SUPFAM" id="SSF52016">
    <property type="entry name" value="LeuD/IlvD-like"/>
    <property type="match status" value="1"/>
</dbReference>
<organism>
    <name type="scientific">Brevibacillus brevis (strain 47 / JCM 6285 / NBRC 100599)</name>
    <dbReference type="NCBI Taxonomy" id="358681"/>
    <lineage>
        <taxon>Bacteria</taxon>
        <taxon>Bacillati</taxon>
        <taxon>Bacillota</taxon>
        <taxon>Bacilli</taxon>
        <taxon>Bacillales</taxon>
        <taxon>Paenibacillaceae</taxon>
        <taxon>Brevibacillus</taxon>
    </lineage>
</organism>
<name>LEUD_BREBN</name>
<gene>
    <name evidence="1" type="primary">leuD</name>
    <name type="ordered locus">BBR47_25320</name>
</gene>
<accession>C0ZCK0</accession>
<proteinExistence type="inferred from homology"/>
<comment type="function">
    <text evidence="1">Catalyzes the isomerization between 2-isopropylmalate and 3-isopropylmalate, via the formation of 2-isopropylmaleate.</text>
</comment>
<comment type="catalytic activity">
    <reaction evidence="1">
        <text>(2R,3S)-3-isopropylmalate = (2S)-2-isopropylmalate</text>
        <dbReference type="Rhea" id="RHEA:32287"/>
        <dbReference type="ChEBI" id="CHEBI:1178"/>
        <dbReference type="ChEBI" id="CHEBI:35121"/>
        <dbReference type="EC" id="4.2.1.33"/>
    </reaction>
</comment>
<comment type="pathway">
    <text evidence="1">Amino-acid biosynthesis; L-leucine biosynthesis; L-leucine from 3-methyl-2-oxobutanoate: step 2/4.</text>
</comment>
<comment type="subunit">
    <text evidence="1">Heterodimer of LeuC and LeuD.</text>
</comment>
<comment type="similarity">
    <text evidence="1">Belongs to the LeuD family. LeuD type 1 subfamily.</text>
</comment>
<feature type="chain" id="PRO_1000149405" description="3-isopropylmalate dehydratase small subunit">
    <location>
        <begin position="1"/>
        <end position="194"/>
    </location>
</feature>
<sequence>MNPFVIHTGVVAPLDRVNVDTDAIIPKQFLKRIERSGFGQFLFYEWRFTVDGAPIDSFILNTPAYKESTVLLARNNFGCGSSREHAPWALLDYGFRCVIAPSFADIFYNNCFKNGILPIKLSEEQVDELFNRAESKPNYQLTIDLQEQVVRDNEGLSYPFEVDSYRRYCLLNGLDDIGITLQYEDKIAAYEARR</sequence>